<sequence>MKYFLDSAILEEIRYAYENWAIDGVTTNPRHIMNSGKPFLTVLDEFASEFKGVENFPISVEINPHLDNAKDMVEEGTKIAKLSSNFVIKIPCTEPGLIAAKEFEKQGISTNVTLVFSPSQALQPARIGAKFVSPFVGWKENSGDDTTQYIQDIVNIYKNYNYNTEIIVAALRNGKQIVDAAKAGAHIVTCGFDVYKESFQHAFTDYGLNKFRNAWDNTVTEAPVLK</sequence>
<evidence type="ECO:0000250" key="1">
    <source>
        <dbReference type="UniProtKB" id="D5E1T2"/>
    </source>
</evidence>
<evidence type="ECO:0000269" key="2">
    <source>
    </source>
</evidence>
<evidence type="ECO:0000303" key="3">
    <source>
    </source>
</evidence>
<evidence type="ECO:0000305" key="4"/>
<evidence type="ECO:0000312" key="5">
    <source>
        <dbReference type="EMBL" id="MBA9036990.1"/>
    </source>
</evidence>
<comment type="function">
    <text evidence="2">Part of the sulfo-TAL (or sulfo-SFT) pathway, a D-sulfoquinovose degradation pathway that produces sulfolactate (SL) (PubMed:32919372). Catalyzes the conversion of 6-deoxy-6-sulfo-D-fructose (SF) and glyceraldehyde 3-phosphate (GAP) into fructose-6-phosphate (F6P) and 3-sulfolactaldehyde (SLA) (PubMed:32919372). Can also catalyze the SF-cleavage with erythrose 4-phosphate (E4P) as acceptor, forming 3-sulfolactaldehyde (SLA) and sedoheptulose 7-phosphate (S7P) (PubMed:32919372).</text>
</comment>
<comment type="catalytic activity">
    <reaction evidence="2">
        <text>6-deoxy-6-sulfo-D-fructose + D-glyceraldehyde 3-phosphate = D-fructose 6-phosphate + (2S)-3-sulfolactaldehyde</text>
        <dbReference type="Rhea" id="RHEA:66716"/>
        <dbReference type="ChEBI" id="CHEBI:59776"/>
        <dbReference type="ChEBI" id="CHEBI:61527"/>
        <dbReference type="ChEBI" id="CHEBI:77133"/>
        <dbReference type="ChEBI" id="CHEBI:90109"/>
        <dbReference type="EC" id="2.2.1.14"/>
    </reaction>
    <physiologicalReaction direction="left-to-right" evidence="2">
        <dbReference type="Rhea" id="RHEA:66717"/>
    </physiologicalReaction>
</comment>
<comment type="catalytic activity">
    <reaction evidence="2">
        <text>6-deoxy-6-sulfo-D-fructose + D-erythrose 4-phosphate = (2S)-3-sulfolactaldehyde + D-sedoheptulose 7-phosphate</text>
        <dbReference type="Rhea" id="RHEA:66920"/>
        <dbReference type="ChEBI" id="CHEBI:16897"/>
        <dbReference type="ChEBI" id="CHEBI:57483"/>
        <dbReference type="ChEBI" id="CHEBI:77133"/>
        <dbReference type="ChEBI" id="CHEBI:90109"/>
        <dbReference type="EC" id="2.2.1.14"/>
    </reaction>
</comment>
<comment type="induction">
    <text evidence="2">Induced by growth on sulfoquinovose.</text>
</comment>
<comment type="similarity">
    <text evidence="4">Belongs to the transaldolase family.</text>
</comment>
<protein>
    <recommendedName>
        <fullName evidence="3">6-deoxy-6-sulfo-D-fructose transaldolase</fullName>
        <shortName evidence="3">SF transaldolase</shortName>
        <shortName evidence="4">SF-TAL</shortName>
        <shortName evidence="4">Sulfofructose transaldolase</shortName>
        <ecNumber evidence="2">2.2.1.14</ecNumber>
    </recommendedName>
    <alternativeName>
        <fullName evidence="3">Sedoheptulose-7-phosphate transaldolase</fullName>
    </alternativeName>
</protein>
<name>SFTAL_PRIAR</name>
<accession>A0A7W3N5X5</accession>
<proteinExistence type="evidence at protein level"/>
<reference key="1">
    <citation type="submission" date="2020-08" db="EMBL/GenBank/DDBJ databases">
        <title>Functional genomics of gut bacteria from endangered species of beetles.</title>
        <authorList>
            <person name="Carlos-Shanley C."/>
        </authorList>
    </citation>
    <scope>NUCLEOTIDE SEQUENCE [LARGE SCALE GENOMIC DNA]</scope>
    <source>
        <strain>S00060</strain>
    </source>
</reference>
<reference key="2">
    <citation type="journal article" date="2020" name="IScience">
        <title>Environmental and Intestinal Phylum Firmicutes Bacteria Metabolize the Plant Sugar Sulfoquinovose via a 6-Deoxy-6-sulfofructose Transaldolase Pathway.</title>
        <authorList>
            <person name="Frommeyer B."/>
            <person name="Fiedler A.W."/>
            <person name="Oehler S.R."/>
            <person name="Hanson B.T."/>
            <person name="Loy A."/>
            <person name="Franchini P."/>
            <person name="Spiteller D."/>
            <person name="Schleheck D."/>
        </authorList>
    </citation>
    <scope>NUCLEOTIDE SEQUENCE [LARGE SCALE GENOMIC DNA]</scope>
    <scope>FUNCTION</scope>
    <scope>CATALYTIC ACTIVITY</scope>
    <scope>INDUCTION</scope>
    <source>
        <strain>SOS1</strain>
    </source>
</reference>
<dbReference type="EC" id="2.2.1.14" evidence="2"/>
<dbReference type="EMBL" id="JACJHT010000001">
    <property type="protein sequence ID" value="MBA9036990.1"/>
    <property type="molecule type" value="Genomic_DNA"/>
</dbReference>
<dbReference type="RefSeq" id="WP_013058335.1">
    <property type="nucleotide sequence ID" value="NZ_CP041519.1"/>
</dbReference>
<dbReference type="EMDB" id="EMD-15960"/>
<dbReference type="EMDB" id="EMD-15961"/>
<dbReference type="EMDB" id="EMD-15962"/>
<dbReference type="SMR" id="A0A7W3N5X5"/>
<dbReference type="Proteomes" id="UP000543174">
    <property type="component" value="Unassembled WGS sequence"/>
</dbReference>
<dbReference type="GO" id="GO:0016832">
    <property type="term" value="F:aldehyde-lyase activity"/>
    <property type="evidence" value="ECO:0007669"/>
    <property type="project" value="InterPro"/>
</dbReference>
<dbReference type="GO" id="GO:0004801">
    <property type="term" value="F:transaldolase activity"/>
    <property type="evidence" value="ECO:0007669"/>
    <property type="project" value="UniProtKB-EC"/>
</dbReference>
<dbReference type="GO" id="GO:0005975">
    <property type="term" value="P:carbohydrate metabolic process"/>
    <property type="evidence" value="ECO:0007669"/>
    <property type="project" value="InterPro"/>
</dbReference>
<dbReference type="CDD" id="cd00956">
    <property type="entry name" value="Transaldolase_FSA"/>
    <property type="match status" value="1"/>
</dbReference>
<dbReference type="Gene3D" id="3.20.20.70">
    <property type="entry name" value="Aldolase class I"/>
    <property type="match status" value="1"/>
</dbReference>
<dbReference type="InterPro" id="IPR013785">
    <property type="entry name" value="Aldolase_TIM"/>
</dbReference>
<dbReference type="InterPro" id="IPR001585">
    <property type="entry name" value="TAL/FSA"/>
</dbReference>
<dbReference type="InterPro" id="IPR033919">
    <property type="entry name" value="TSA/FSA_arc/bac"/>
</dbReference>
<dbReference type="PANTHER" id="PTHR10683:SF40">
    <property type="entry name" value="FRUCTOSE-6-PHOSPHATE ALDOLASE 1-RELATED"/>
    <property type="match status" value="1"/>
</dbReference>
<dbReference type="PANTHER" id="PTHR10683">
    <property type="entry name" value="TRANSALDOLASE"/>
    <property type="match status" value="1"/>
</dbReference>
<dbReference type="Pfam" id="PF00923">
    <property type="entry name" value="TAL_FSA"/>
    <property type="match status" value="1"/>
</dbReference>
<dbReference type="SUPFAM" id="SSF51569">
    <property type="entry name" value="Aldolase"/>
    <property type="match status" value="1"/>
</dbReference>
<gene>
    <name evidence="3" type="primary">sftT</name>
    <name evidence="3" type="ORF">Ga0111075_10031320</name>
    <name evidence="5" type="ORF">HNP21_000079</name>
</gene>
<keyword id="KW-0119">Carbohydrate metabolism</keyword>
<keyword id="KW-0704">Schiff base</keyword>
<keyword id="KW-0808">Transferase</keyword>
<organism>
    <name type="scientific">Priestia aryabhattai</name>
    <name type="common">Bacillus aryabhattai</name>
    <dbReference type="NCBI Taxonomy" id="412384"/>
    <lineage>
        <taxon>Bacteria</taxon>
        <taxon>Bacillati</taxon>
        <taxon>Bacillota</taxon>
        <taxon>Bacilli</taxon>
        <taxon>Bacillales</taxon>
        <taxon>Bacillaceae</taxon>
        <taxon>Priestia</taxon>
    </lineage>
</organism>
<feature type="chain" id="PRO_0000458971" description="6-deoxy-6-sulfo-D-fructose transaldolase">
    <location>
        <begin position="1"/>
        <end position="226"/>
    </location>
</feature>
<feature type="active site" description="Schiff-base intermediate with substrate" evidence="1">
    <location>
        <position position="89"/>
    </location>
</feature>